<comment type="function">
    <text evidence="1">Located at the top of the head of the 30S subunit, it contacts several helices of the 16S rRNA. In the 70S ribosome it contacts the 23S rRNA (bridge B1a) and protein L5 of the 50S subunit (bridge B1b), connecting the 2 subunits; these bridges are implicated in subunit movement. Contacts the tRNAs in the A and P-sites.</text>
</comment>
<comment type="subunit">
    <text evidence="1">Part of the 30S ribosomal subunit. Forms a loose heterodimer with protein S19. Forms two bridges to the 50S subunit in the 70S ribosome.</text>
</comment>
<comment type="similarity">
    <text evidence="1">Belongs to the universal ribosomal protein uS13 family.</text>
</comment>
<sequence>MARVLNVEIPNHKRIVIALCSIFGIGKSLATEIVEKTAKLQEEKFGKKFPILTENTKVKEINEEVLQVIRDVAKTYKTEGDLHREVQSNIKRLIEIKCYRGIRHRKGLPVRGQVTQKNARTRKGPRKTIMAKKDKGK</sequence>
<organism>
    <name type="scientific">Mesomycoplasma hyopneumoniae (strain 232)</name>
    <name type="common">Mycoplasma hyopneumoniae</name>
    <dbReference type="NCBI Taxonomy" id="295358"/>
    <lineage>
        <taxon>Bacteria</taxon>
        <taxon>Bacillati</taxon>
        <taxon>Mycoplasmatota</taxon>
        <taxon>Mycoplasmoidales</taxon>
        <taxon>Metamycoplasmataceae</taxon>
        <taxon>Mesomycoplasma</taxon>
    </lineage>
</organism>
<feature type="chain" id="PRO_0000306655" description="Small ribosomal subunit protein uS13">
    <location>
        <begin position="1"/>
        <end position="137"/>
    </location>
</feature>
<feature type="region of interest" description="Disordered" evidence="2">
    <location>
        <begin position="114"/>
        <end position="137"/>
    </location>
</feature>
<feature type="compositionally biased region" description="Basic residues" evidence="2">
    <location>
        <begin position="119"/>
        <end position="130"/>
    </location>
</feature>
<accession>Q601J1</accession>
<keyword id="KW-0687">Ribonucleoprotein</keyword>
<keyword id="KW-0689">Ribosomal protein</keyword>
<keyword id="KW-0694">RNA-binding</keyword>
<keyword id="KW-0699">rRNA-binding</keyword>
<keyword id="KW-0820">tRNA-binding</keyword>
<dbReference type="EMBL" id="AE017332">
    <property type="protein sequence ID" value="AAV27467.1"/>
    <property type="molecule type" value="Genomic_DNA"/>
</dbReference>
<dbReference type="RefSeq" id="WP_011206048.1">
    <property type="nucleotide sequence ID" value="NC_006360.1"/>
</dbReference>
<dbReference type="SMR" id="Q601J1"/>
<dbReference type="GeneID" id="41334469"/>
<dbReference type="KEGG" id="mhy:mhp211"/>
<dbReference type="eggNOG" id="COG0099">
    <property type="taxonomic scope" value="Bacteria"/>
</dbReference>
<dbReference type="HOGENOM" id="CLU_103849_1_2_14"/>
<dbReference type="PhylomeDB" id="Q601J1"/>
<dbReference type="Proteomes" id="UP000006822">
    <property type="component" value="Chromosome"/>
</dbReference>
<dbReference type="GO" id="GO:0005829">
    <property type="term" value="C:cytosol"/>
    <property type="evidence" value="ECO:0007669"/>
    <property type="project" value="TreeGrafter"/>
</dbReference>
<dbReference type="GO" id="GO:0015935">
    <property type="term" value="C:small ribosomal subunit"/>
    <property type="evidence" value="ECO:0007669"/>
    <property type="project" value="TreeGrafter"/>
</dbReference>
<dbReference type="GO" id="GO:0019843">
    <property type="term" value="F:rRNA binding"/>
    <property type="evidence" value="ECO:0007669"/>
    <property type="project" value="UniProtKB-UniRule"/>
</dbReference>
<dbReference type="GO" id="GO:0003735">
    <property type="term" value="F:structural constituent of ribosome"/>
    <property type="evidence" value="ECO:0007669"/>
    <property type="project" value="InterPro"/>
</dbReference>
<dbReference type="GO" id="GO:0000049">
    <property type="term" value="F:tRNA binding"/>
    <property type="evidence" value="ECO:0007669"/>
    <property type="project" value="UniProtKB-UniRule"/>
</dbReference>
<dbReference type="GO" id="GO:0006412">
    <property type="term" value="P:translation"/>
    <property type="evidence" value="ECO:0007669"/>
    <property type="project" value="UniProtKB-UniRule"/>
</dbReference>
<dbReference type="FunFam" id="4.10.910.10:FF:000001">
    <property type="entry name" value="30S ribosomal protein S13"/>
    <property type="match status" value="1"/>
</dbReference>
<dbReference type="Gene3D" id="1.10.8.50">
    <property type="match status" value="1"/>
</dbReference>
<dbReference type="Gene3D" id="4.10.910.10">
    <property type="entry name" value="30s ribosomal protein s13, domain 2"/>
    <property type="match status" value="1"/>
</dbReference>
<dbReference type="HAMAP" id="MF_01315">
    <property type="entry name" value="Ribosomal_uS13"/>
    <property type="match status" value="1"/>
</dbReference>
<dbReference type="InterPro" id="IPR027437">
    <property type="entry name" value="Rbsml_uS13_C"/>
</dbReference>
<dbReference type="InterPro" id="IPR001892">
    <property type="entry name" value="Ribosomal_uS13"/>
</dbReference>
<dbReference type="InterPro" id="IPR010979">
    <property type="entry name" value="Ribosomal_uS13-like_H2TH"/>
</dbReference>
<dbReference type="InterPro" id="IPR018269">
    <property type="entry name" value="Ribosomal_uS13_CS"/>
</dbReference>
<dbReference type="PANTHER" id="PTHR10871">
    <property type="entry name" value="30S RIBOSOMAL PROTEIN S13/40S RIBOSOMAL PROTEIN S18"/>
    <property type="match status" value="1"/>
</dbReference>
<dbReference type="PANTHER" id="PTHR10871:SF1">
    <property type="entry name" value="SMALL RIBOSOMAL SUBUNIT PROTEIN US13M"/>
    <property type="match status" value="1"/>
</dbReference>
<dbReference type="Pfam" id="PF00416">
    <property type="entry name" value="Ribosomal_S13"/>
    <property type="match status" value="1"/>
</dbReference>
<dbReference type="PIRSF" id="PIRSF002134">
    <property type="entry name" value="Ribosomal_S13"/>
    <property type="match status" value="1"/>
</dbReference>
<dbReference type="SUPFAM" id="SSF46946">
    <property type="entry name" value="S13-like H2TH domain"/>
    <property type="match status" value="1"/>
</dbReference>
<dbReference type="PROSITE" id="PS00646">
    <property type="entry name" value="RIBOSOMAL_S13_1"/>
    <property type="match status" value="1"/>
</dbReference>
<dbReference type="PROSITE" id="PS50159">
    <property type="entry name" value="RIBOSOMAL_S13_2"/>
    <property type="match status" value="1"/>
</dbReference>
<protein>
    <recommendedName>
        <fullName evidence="1">Small ribosomal subunit protein uS13</fullName>
    </recommendedName>
    <alternativeName>
        <fullName evidence="3">30S ribosomal protein S13</fullName>
    </alternativeName>
</protein>
<proteinExistence type="inferred from homology"/>
<gene>
    <name evidence="1" type="primary">rpsM</name>
    <name type="ordered locus">mhp211</name>
</gene>
<name>RS13_MESH2</name>
<evidence type="ECO:0000255" key="1">
    <source>
        <dbReference type="HAMAP-Rule" id="MF_01315"/>
    </source>
</evidence>
<evidence type="ECO:0000256" key="2">
    <source>
        <dbReference type="SAM" id="MobiDB-lite"/>
    </source>
</evidence>
<evidence type="ECO:0000305" key="3"/>
<reference key="1">
    <citation type="journal article" date="2004" name="J. Bacteriol.">
        <title>The genome sequence of Mycoplasma hyopneumoniae strain 232, the agent of swine mycoplasmosis.</title>
        <authorList>
            <person name="Minion F.C."/>
            <person name="Lefkowitz E.J."/>
            <person name="Madsen M.L."/>
            <person name="Cleary B.J."/>
            <person name="Swartzell S.M."/>
            <person name="Mahairas G.G."/>
        </authorList>
    </citation>
    <scope>NUCLEOTIDE SEQUENCE [LARGE SCALE GENOMIC DNA]</scope>
    <source>
        <strain>232</strain>
    </source>
</reference>